<sequence length="154" mass="17751">MNWAKRSAFFLISVACFLADYYSKYWALTELGARKIVVNTYMNFILAFNHGAAFSFLARAGGWQRWLFAGFAGIVALWLIMTLLTKSHHWLMSVSYACILGGAVGNLYDRVVYGYVIDFIQWHYRTFYWPVFNLADVAITLGVILMLIAELHRR</sequence>
<evidence type="ECO:0000255" key="1">
    <source>
        <dbReference type="HAMAP-Rule" id="MF_00161"/>
    </source>
</evidence>
<gene>
    <name evidence="1" type="primary">lspA</name>
    <name type="ordered locus">DNO_0084</name>
</gene>
<proteinExistence type="inferred from homology"/>
<feature type="chain" id="PRO_1000071545" description="Lipoprotein signal peptidase">
    <location>
        <begin position="1"/>
        <end position="154"/>
    </location>
</feature>
<feature type="transmembrane region" description="Helical" evidence="1">
    <location>
        <begin position="8"/>
        <end position="28"/>
    </location>
</feature>
<feature type="transmembrane region" description="Helical" evidence="1">
    <location>
        <begin position="36"/>
        <end position="56"/>
    </location>
</feature>
<feature type="transmembrane region" description="Helical" evidence="1">
    <location>
        <begin position="66"/>
        <end position="86"/>
    </location>
</feature>
<feature type="transmembrane region" description="Helical" evidence="1">
    <location>
        <begin position="88"/>
        <end position="108"/>
    </location>
</feature>
<feature type="transmembrane region" description="Helical" evidence="1">
    <location>
        <begin position="129"/>
        <end position="149"/>
    </location>
</feature>
<feature type="active site" evidence="1">
    <location>
        <position position="118"/>
    </location>
</feature>
<feature type="active site" evidence="1">
    <location>
        <position position="136"/>
    </location>
</feature>
<keyword id="KW-0064">Aspartyl protease</keyword>
<keyword id="KW-0997">Cell inner membrane</keyword>
<keyword id="KW-1003">Cell membrane</keyword>
<keyword id="KW-0378">Hydrolase</keyword>
<keyword id="KW-0472">Membrane</keyword>
<keyword id="KW-0645">Protease</keyword>
<keyword id="KW-1185">Reference proteome</keyword>
<keyword id="KW-0812">Transmembrane</keyword>
<keyword id="KW-1133">Transmembrane helix</keyword>
<accession>A5EWT1</accession>
<dbReference type="EC" id="3.4.23.36" evidence="1"/>
<dbReference type="EMBL" id="CP000513">
    <property type="protein sequence ID" value="ABQ13650.1"/>
    <property type="molecule type" value="Genomic_DNA"/>
</dbReference>
<dbReference type="RefSeq" id="WP_011927836.1">
    <property type="nucleotide sequence ID" value="NC_009446.1"/>
</dbReference>
<dbReference type="SMR" id="A5EWT1"/>
<dbReference type="STRING" id="246195.DNO_0084"/>
<dbReference type="KEGG" id="dno:DNO_0084"/>
<dbReference type="eggNOG" id="COG0597">
    <property type="taxonomic scope" value="Bacteria"/>
</dbReference>
<dbReference type="HOGENOM" id="CLU_083252_3_1_6"/>
<dbReference type="OrthoDB" id="9810259at2"/>
<dbReference type="UniPathway" id="UPA00665"/>
<dbReference type="Proteomes" id="UP000000248">
    <property type="component" value="Chromosome"/>
</dbReference>
<dbReference type="GO" id="GO:0005886">
    <property type="term" value="C:plasma membrane"/>
    <property type="evidence" value="ECO:0007669"/>
    <property type="project" value="UniProtKB-SubCell"/>
</dbReference>
<dbReference type="GO" id="GO:0004190">
    <property type="term" value="F:aspartic-type endopeptidase activity"/>
    <property type="evidence" value="ECO:0007669"/>
    <property type="project" value="UniProtKB-UniRule"/>
</dbReference>
<dbReference type="GO" id="GO:0006508">
    <property type="term" value="P:proteolysis"/>
    <property type="evidence" value="ECO:0007669"/>
    <property type="project" value="UniProtKB-KW"/>
</dbReference>
<dbReference type="HAMAP" id="MF_00161">
    <property type="entry name" value="LspA"/>
    <property type="match status" value="1"/>
</dbReference>
<dbReference type="InterPro" id="IPR001872">
    <property type="entry name" value="Peptidase_A8"/>
</dbReference>
<dbReference type="NCBIfam" id="TIGR00077">
    <property type="entry name" value="lspA"/>
    <property type="match status" value="1"/>
</dbReference>
<dbReference type="PANTHER" id="PTHR33695">
    <property type="entry name" value="LIPOPROTEIN SIGNAL PEPTIDASE"/>
    <property type="match status" value="1"/>
</dbReference>
<dbReference type="PANTHER" id="PTHR33695:SF1">
    <property type="entry name" value="LIPOPROTEIN SIGNAL PEPTIDASE"/>
    <property type="match status" value="1"/>
</dbReference>
<dbReference type="Pfam" id="PF01252">
    <property type="entry name" value="Peptidase_A8"/>
    <property type="match status" value="1"/>
</dbReference>
<dbReference type="PRINTS" id="PR00781">
    <property type="entry name" value="LIPOSIGPTASE"/>
</dbReference>
<dbReference type="PROSITE" id="PS00855">
    <property type="entry name" value="SPASE_II"/>
    <property type="match status" value="1"/>
</dbReference>
<name>LSPA_DICNV</name>
<protein>
    <recommendedName>
        <fullName evidence="1">Lipoprotein signal peptidase</fullName>
        <ecNumber evidence="1">3.4.23.36</ecNumber>
    </recommendedName>
    <alternativeName>
        <fullName evidence="1">Prolipoprotein signal peptidase</fullName>
    </alternativeName>
    <alternativeName>
        <fullName evidence="1">Signal peptidase II</fullName>
        <shortName evidence="1">SPase II</shortName>
    </alternativeName>
</protein>
<comment type="function">
    <text evidence="1">This protein specifically catalyzes the removal of signal peptides from prolipoproteins.</text>
</comment>
<comment type="catalytic activity">
    <reaction evidence="1">
        <text>Release of signal peptides from bacterial membrane prolipoproteins. Hydrolyzes -Xaa-Yaa-Zaa-|-(S,diacylglyceryl)Cys-, in which Xaa is hydrophobic (preferably Leu), and Yaa (Ala or Ser) and Zaa (Gly or Ala) have small, neutral side chains.</text>
        <dbReference type="EC" id="3.4.23.36"/>
    </reaction>
</comment>
<comment type="pathway">
    <text evidence="1">Protein modification; lipoprotein biosynthesis (signal peptide cleavage).</text>
</comment>
<comment type="subcellular location">
    <subcellularLocation>
        <location evidence="1">Cell inner membrane</location>
        <topology evidence="1">Multi-pass membrane protein</topology>
    </subcellularLocation>
</comment>
<comment type="similarity">
    <text evidence="1">Belongs to the peptidase A8 family.</text>
</comment>
<reference key="1">
    <citation type="journal article" date="2007" name="Nat. Biotechnol.">
        <title>Genome sequence and identification of candidate vaccine antigens from the animal pathogen Dichelobacter nodosus.</title>
        <authorList>
            <person name="Myers G.S.A."/>
            <person name="Parker D."/>
            <person name="Al-Hasani K."/>
            <person name="Kennan R.M."/>
            <person name="Seemann T."/>
            <person name="Ren Q."/>
            <person name="Badger J.H."/>
            <person name="Selengut J.D."/>
            <person name="Deboy R.T."/>
            <person name="Tettelin H."/>
            <person name="Boyce J.D."/>
            <person name="McCarl V.P."/>
            <person name="Han X."/>
            <person name="Nelson W.C."/>
            <person name="Madupu R."/>
            <person name="Mohamoud Y."/>
            <person name="Holley T."/>
            <person name="Fedorova N."/>
            <person name="Khouri H."/>
            <person name="Bottomley S.P."/>
            <person name="Whittington R.J."/>
            <person name="Adler B."/>
            <person name="Songer J.G."/>
            <person name="Rood J.I."/>
            <person name="Paulsen I.T."/>
        </authorList>
    </citation>
    <scope>NUCLEOTIDE SEQUENCE [LARGE SCALE GENOMIC DNA]</scope>
    <source>
        <strain>VCS1703A</strain>
    </source>
</reference>
<organism>
    <name type="scientific">Dichelobacter nodosus (strain VCS1703A)</name>
    <dbReference type="NCBI Taxonomy" id="246195"/>
    <lineage>
        <taxon>Bacteria</taxon>
        <taxon>Pseudomonadati</taxon>
        <taxon>Pseudomonadota</taxon>
        <taxon>Gammaproteobacteria</taxon>
        <taxon>Cardiobacteriales</taxon>
        <taxon>Cardiobacteriaceae</taxon>
        <taxon>Dichelobacter</taxon>
    </lineage>
</organism>